<name>RPOB_MESFL</name>
<reference key="1">
    <citation type="submission" date="2004-06" db="EMBL/GenBank/DDBJ databases">
        <authorList>
            <person name="Birren B.W."/>
            <person name="Stange-Thomann N."/>
            <person name="Hafez N."/>
            <person name="DeCaprio D."/>
            <person name="Fisher S."/>
            <person name="Butler J."/>
            <person name="Elkins T."/>
            <person name="Kodira C.D."/>
            <person name="Major J."/>
            <person name="Wang S."/>
            <person name="Nicol R."/>
            <person name="Nusbaum C."/>
        </authorList>
    </citation>
    <scope>NUCLEOTIDE SEQUENCE [LARGE SCALE GENOMIC DNA]</scope>
    <source>
        <strain>ATCC 33453 / NBRC 100688 / NCTC 11704 / L1</strain>
    </source>
</reference>
<protein>
    <recommendedName>
        <fullName evidence="1">DNA-directed RNA polymerase subunit beta</fullName>
        <shortName evidence="1">RNAP subunit beta</shortName>
        <ecNumber evidence="1">2.7.7.6</ecNumber>
    </recommendedName>
    <alternativeName>
        <fullName evidence="1">RNA polymerase subunit beta</fullName>
    </alternativeName>
    <alternativeName>
        <fullName evidence="1">Transcriptase subunit beta</fullName>
    </alternativeName>
</protein>
<accession>Q6F0L7</accession>
<feature type="chain" id="PRO_0000224072" description="DNA-directed RNA polymerase subunit beta">
    <location>
        <begin position="1"/>
        <end position="1284"/>
    </location>
</feature>
<keyword id="KW-0240">DNA-directed RNA polymerase</keyword>
<keyword id="KW-0548">Nucleotidyltransferase</keyword>
<keyword id="KW-1185">Reference proteome</keyword>
<keyword id="KW-0804">Transcription</keyword>
<keyword id="KW-0808">Transferase</keyword>
<gene>
    <name evidence="1" type="primary">rpoB</name>
    <name type="ordered locus">Mfl598</name>
</gene>
<comment type="function">
    <text evidence="1">DNA-dependent RNA polymerase catalyzes the transcription of DNA into RNA using the four ribonucleoside triphosphates as substrates.</text>
</comment>
<comment type="catalytic activity">
    <reaction evidence="1">
        <text>RNA(n) + a ribonucleoside 5'-triphosphate = RNA(n+1) + diphosphate</text>
        <dbReference type="Rhea" id="RHEA:21248"/>
        <dbReference type="Rhea" id="RHEA-COMP:14527"/>
        <dbReference type="Rhea" id="RHEA-COMP:17342"/>
        <dbReference type="ChEBI" id="CHEBI:33019"/>
        <dbReference type="ChEBI" id="CHEBI:61557"/>
        <dbReference type="ChEBI" id="CHEBI:140395"/>
        <dbReference type="EC" id="2.7.7.6"/>
    </reaction>
</comment>
<comment type="subunit">
    <text evidence="1">The RNAP catalytic core consists of 2 alpha, 1 beta, 1 beta' and 1 omega subunit. When a sigma factor is associated with the core the holoenzyme is formed, which can initiate transcription.</text>
</comment>
<comment type="similarity">
    <text evidence="1">Belongs to the RNA polymerase beta chain family.</text>
</comment>
<organism>
    <name type="scientific">Mesoplasma florum (strain ATCC 33453 / NBRC 100688 / NCTC 11704 / L1)</name>
    <name type="common">Acholeplasma florum</name>
    <dbReference type="NCBI Taxonomy" id="265311"/>
    <lineage>
        <taxon>Bacteria</taxon>
        <taxon>Bacillati</taxon>
        <taxon>Mycoplasmatota</taxon>
        <taxon>Mollicutes</taxon>
        <taxon>Entomoplasmatales</taxon>
        <taxon>Entomoplasmataceae</taxon>
        <taxon>Mesoplasma</taxon>
    </lineage>
</organism>
<dbReference type="EC" id="2.7.7.6" evidence="1"/>
<dbReference type="EMBL" id="AE017263">
    <property type="protein sequence ID" value="AAT75956.1"/>
    <property type="molecule type" value="Genomic_DNA"/>
</dbReference>
<dbReference type="RefSeq" id="WP_011183496.1">
    <property type="nucleotide sequence ID" value="NC_006055.1"/>
</dbReference>
<dbReference type="RefSeq" id="YP_053840.1">
    <property type="nucleotide sequence ID" value="NC_006055.1"/>
</dbReference>
<dbReference type="SMR" id="Q6F0L7"/>
<dbReference type="STRING" id="265311.Mfl598"/>
<dbReference type="PaxDb" id="265311-Mfl598"/>
<dbReference type="EnsemblBacteria" id="AAT75956">
    <property type="protein sequence ID" value="AAT75956"/>
    <property type="gene ID" value="Mfl598"/>
</dbReference>
<dbReference type="GeneID" id="2897590"/>
<dbReference type="KEGG" id="mfl:Mfl598"/>
<dbReference type="PATRIC" id="fig|265311.5.peg.602"/>
<dbReference type="eggNOG" id="COG0085">
    <property type="taxonomic scope" value="Bacteria"/>
</dbReference>
<dbReference type="HOGENOM" id="CLU_000524_4_3_14"/>
<dbReference type="OrthoDB" id="9803954at2"/>
<dbReference type="Proteomes" id="UP000006647">
    <property type="component" value="Chromosome"/>
</dbReference>
<dbReference type="GO" id="GO:0000428">
    <property type="term" value="C:DNA-directed RNA polymerase complex"/>
    <property type="evidence" value="ECO:0007669"/>
    <property type="project" value="UniProtKB-KW"/>
</dbReference>
<dbReference type="GO" id="GO:0003677">
    <property type="term" value="F:DNA binding"/>
    <property type="evidence" value="ECO:0007669"/>
    <property type="project" value="UniProtKB-UniRule"/>
</dbReference>
<dbReference type="GO" id="GO:0003899">
    <property type="term" value="F:DNA-directed RNA polymerase activity"/>
    <property type="evidence" value="ECO:0007669"/>
    <property type="project" value="UniProtKB-UniRule"/>
</dbReference>
<dbReference type="GO" id="GO:0032549">
    <property type="term" value="F:ribonucleoside binding"/>
    <property type="evidence" value="ECO:0007669"/>
    <property type="project" value="InterPro"/>
</dbReference>
<dbReference type="GO" id="GO:0006351">
    <property type="term" value="P:DNA-templated transcription"/>
    <property type="evidence" value="ECO:0007669"/>
    <property type="project" value="UniProtKB-UniRule"/>
</dbReference>
<dbReference type="CDD" id="cd00653">
    <property type="entry name" value="RNA_pol_B_RPB2"/>
    <property type="match status" value="1"/>
</dbReference>
<dbReference type="Gene3D" id="2.40.50.100">
    <property type="match status" value="1"/>
</dbReference>
<dbReference type="Gene3D" id="2.40.50.150">
    <property type="match status" value="1"/>
</dbReference>
<dbReference type="Gene3D" id="3.90.1100.10">
    <property type="match status" value="1"/>
</dbReference>
<dbReference type="Gene3D" id="2.30.150.10">
    <property type="entry name" value="DNA-directed RNA polymerase, beta subunit, external 1 domain"/>
    <property type="match status" value="1"/>
</dbReference>
<dbReference type="Gene3D" id="2.40.270.10">
    <property type="entry name" value="DNA-directed RNA polymerase, subunit 2, domain 6"/>
    <property type="match status" value="1"/>
</dbReference>
<dbReference type="Gene3D" id="3.90.1800.10">
    <property type="entry name" value="RNA polymerase alpha subunit dimerisation domain"/>
    <property type="match status" value="1"/>
</dbReference>
<dbReference type="Gene3D" id="3.90.1110.10">
    <property type="entry name" value="RNA polymerase Rpb2, domain 2"/>
    <property type="match status" value="1"/>
</dbReference>
<dbReference type="HAMAP" id="MF_01321">
    <property type="entry name" value="RNApol_bact_RpoB"/>
    <property type="match status" value="1"/>
</dbReference>
<dbReference type="InterPro" id="IPR042107">
    <property type="entry name" value="DNA-dir_RNA_pol_bsu_ext_1_sf"/>
</dbReference>
<dbReference type="InterPro" id="IPR019462">
    <property type="entry name" value="DNA-dir_RNA_pol_bsu_external_1"/>
</dbReference>
<dbReference type="InterPro" id="IPR015712">
    <property type="entry name" value="DNA-dir_RNA_pol_su2"/>
</dbReference>
<dbReference type="InterPro" id="IPR007120">
    <property type="entry name" value="DNA-dir_RNAP_su2_dom"/>
</dbReference>
<dbReference type="InterPro" id="IPR037033">
    <property type="entry name" value="DNA-dir_RNAP_su2_hyb_sf"/>
</dbReference>
<dbReference type="InterPro" id="IPR010243">
    <property type="entry name" value="RNA_pol_bsu_bac"/>
</dbReference>
<dbReference type="InterPro" id="IPR007121">
    <property type="entry name" value="RNA_pol_bsu_CS"/>
</dbReference>
<dbReference type="InterPro" id="IPR007644">
    <property type="entry name" value="RNA_pol_bsu_protrusion"/>
</dbReference>
<dbReference type="InterPro" id="IPR007642">
    <property type="entry name" value="RNA_pol_Rpb2_2"/>
</dbReference>
<dbReference type="InterPro" id="IPR037034">
    <property type="entry name" value="RNA_pol_Rpb2_2_sf"/>
</dbReference>
<dbReference type="InterPro" id="IPR007645">
    <property type="entry name" value="RNA_pol_Rpb2_3"/>
</dbReference>
<dbReference type="InterPro" id="IPR007641">
    <property type="entry name" value="RNA_pol_Rpb2_7"/>
</dbReference>
<dbReference type="InterPro" id="IPR014724">
    <property type="entry name" value="RNA_pol_RPB2_OB-fold"/>
</dbReference>
<dbReference type="NCBIfam" id="NF001616">
    <property type="entry name" value="PRK00405.1"/>
    <property type="match status" value="1"/>
</dbReference>
<dbReference type="NCBIfam" id="TIGR02013">
    <property type="entry name" value="rpoB"/>
    <property type="match status" value="1"/>
</dbReference>
<dbReference type="PANTHER" id="PTHR20856">
    <property type="entry name" value="DNA-DIRECTED RNA POLYMERASE I SUBUNIT 2"/>
    <property type="match status" value="1"/>
</dbReference>
<dbReference type="Pfam" id="PF04563">
    <property type="entry name" value="RNA_pol_Rpb2_1"/>
    <property type="match status" value="1"/>
</dbReference>
<dbReference type="Pfam" id="PF04561">
    <property type="entry name" value="RNA_pol_Rpb2_2"/>
    <property type="match status" value="2"/>
</dbReference>
<dbReference type="Pfam" id="PF04565">
    <property type="entry name" value="RNA_pol_Rpb2_3"/>
    <property type="match status" value="1"/>
</dbReference>
<dbReference type="Pfam" id="PF10385">
    <property type="entry name" value="RNA_pol_Rpb2_45"/>
    <property type="match status" value="1"/>
</dbReference>
<dbReference type="Pfam" id="PF00562">
    <property type="entry name" value="RNA_pol_Rpb2_6"/>
    <property type="match status" value="1"/>
</dbReference>
<dbReference type="Pfam" id="PF04560">
    <property type="entry name" value="RNA_pol_Rpb2_7"/>
    <property type="match status" value="1"/>
</dbReference>
<dbReference type="SUPFAM" id="SSF64484">
    <property type="entry name" value="beta and beta-prime subunits of DNA dependent RNA-polymerase"/>
    <property type="match status" value="1"/>
</dbReference>
<dbReference type="PROSITE" id="PS01166">
    <property type="entry name" value="RNA_POL_BETA"/>
    <property type="match status" value="1"/>
</dbReference>
<evidence type="ECO:0000255" key="1">
    <source>
        <dbReference type="HAMAP-Rule" id="MF_01321"/>
    </source>
</evidence>
<proteinExistence type="inferred from homology"/>
<sequence>MAYKIKKVNRGVERRDYRKVSGNLELPNLIEIQTKTFEWFKTKGIDEVLNEFFAMSSNDASASLFLEGWEIKEAKISPSKAKEQSKIYDAPIYVDLQLMFTKTEDISKEFEEIVEKDVKKVLSNWIAEKTDSKNVSLVKNTDNIYFFDVKLKGTEKNDLFQITILEEKEDIIVAEVSVRKWGQVFFGDFPLMTDAGTFVINGSQKVIVSQLVRSPGSYFKTEINNKTGESLYNGDIIPSRGTWLEFETDTKKTAETTNSLFVKIDKSRKTTATSFLKILGLDRDTILNIYDKDKVIVETLKNDNDTGDTYADWAQHVQEIYKKIRQGETATSDGASKYINGLLFDRRKYDLTKAGRFKLQQKLAVKNRLMGRILAEDIVDASGKILVAKNTEISKANIKEVSDALSQDGVMVSSIEYREDIPGSRQIQKVKVYQDNNSKDETFTIVGITPNSKEEHITVVDIVATVSYLLGLEYNIGEYDDIDNLANRRVRTVGELLQNQFRMGLTRIDKNVKEKLSTSDLYKVKVSTIINAKPLTAVIGEFFNLSQLSQFMDQINPLAELTNKRRLTALGPGGLSRDRASLEVRDVHPSHYGRICPIETPEGPNIGLINNLSTYAIVDELGFIRTPYLKVIDGVIQNEHEYLSADEEKEYIISQSNVTKDENGKILDETVVSHYKGDDYIAKVSEVQFIDVSPKQIVSVATSAIPFLENDDANRALMGANMQRQAVPTIVPESPFVGTGIEFEAARDSGVCIVATENGIVKYVDAKQITVESKAGIKTYTLANFERSNNGSSIVQKPIVKVGDSIEAGQIIADGPSVDNGELALGQNVVVAFTTYNGYNFEDAIVMSERVIMEDKFTSVHIDEYVLEVRNTKQGAEEITSEIPNISDNAKKYLDNEGIVAIGTEVKTGDILVGKVTPKGQTQLSPEDKLLHAIFGEKSRSVKDNSLKVPNGGEGIVQSVKRFKAKSAANPDGIDLPADVLEVIKVYIVQKRKIQEGDKMSGRHGNKGIISKVLPVEDMPHLEDGTPVDILLNPQGIPSRMNIGQILEIHLGMAAKKLGVKIATPVFEGVNSNDLDEIMAEAGMENYGKVKLIDGQTGEAIDKPISVGVMYMLKLSHMVDDKLHARSVGPYSLITQQPLGGKAQNGGQRFGEMEVWALEAYGAAHTLREILTIKSDDLKGRTKTYEAIVRSKNIPTPGTPESFNVLSKEIMGLGFDIYLLDNKGNKSQINAYDDDNDLINDESMKHASIDKLTFEDSISLVEIEDLDSFEEVDESEINLSFEEE</sequence>